<reference key="1">
    <citation type="submission" date="2007-02" db="EMBL/GenBank/DDBJ databases">
        <title>Complete sequence of Mycobacterium sp. JLS.</title>
        <authorList>
            <consortium name="US DOE Joint Genome Institute"/>
            <person name="Copeland A."/>
            <person name="Lucas S."/>
            <person name="Lapidus A."/>
            <person name="Barry K."/>
            <person name="Detter J.C."/>
            <person name="Glavina del Rio T."/>
            <person name="Hammon N."/>
            <person name="Israni S."/>
            <person name="Dalin E."/>
            <person name="Tice H."/>
            <person name="Pitluck S."/>
            <person name="Chain P."/>
            <person name="Malfatti S."/>
            <person name="Shin M."/>
            <person name="Vergez L."/>
            <person name="Schmutz J."/>
            <person name="Larimer F."/>
            <person name="Land M."/>
            <person name="Hauser L."/>
            <person name="Kyrpides N."/>
            <person name="Mikhailova N."/>
            <person name="Miller C.D."/>
            <person name="Anderson A.J."/>
            <person name="Sims R.C."/>
            <person name="Richardson P."/>
        </authorList>
    </citation>
    <scope>NUCLEOTIDE SEQUENCE [LARGE SCALE GENOMIC DNA]</scope>
    <source>
        <strain>JLS</strain>
    </source>
</reference>
<keyword id="KW-0068">Autocatalytic cleavage</keyword>
<keyword id="KW-0963">Cytoplasm</keyword>
<keyword id="KW-0378">Hydrolase</keyword>
<keyword id="KW-0645">Protease</keyword>
<keyword id="KW-0647">Proteasome</keyword>
<keyword id="KW-0888">Threonine protease</keyword>
<keyword id="KW-0865">Zymogen</keyword>
<gene>
    <name evidence="1" type="primary">prcB</name>
    <name type="ordered locus">Mjls_3141</name>
</gene>
<organism>
    <name type="scientific">Mycobacterium sp. (strain JLS)</name>
    <dbReference type="NCBI Taxonomy" id="164757"/>
    <lineage>
        <taxon>Bacteria</taxon>
        <taxon>Bacillati</taxon>
        <taxon>Actinomycetota</taxon>
        <taxon>Actinomycetes</taxon>
        <taxon>Mycobacteriales</taxon>
        <taxon>Mycobacteriaceae</taxon>
        <taxon>Mycobacterium</taxon>
    </lineage>
</organism>
<comment type="function">
    <text evidence="1">Component of the proteasome core, a large protease complex with broad specificity involved in protein degradation.</text>
</comment>
<comment type="catalytic activity">
    <reaction evidence="1">
        <text>Cleavage of peptide bonds with very broad specificity.</text>
        <dbReference type="EC" id="3.4.25.1"/>
    </reaction>
</comment>
<comment type="activity regulation">
    <text evidence="1">The formation of the proteasomal ATPase ARC-20S proteasome complex, likely via the docking of the C-termini of ARC into the intersubunit pockets in the alpha-rings, may trigger opening of the gate for substrate entry. Interconversion between the open-gate and close-gate conformations leads to a dynamic regulation of the 20S proteasome proteolysis activity.</text>
</comment>
<comment type="pathway">
    <text evidence="1">Protein degradation; proteasomal Pup-dependent pathway.</text>
</comment>
<comment type="subunit">
    <text evidence="1">The 20S proteasome core is composed of 14 alpha and 14 beta subunits that assemble into four stacked heptameric rings, resulting in a barrel-shaped structure. The two inner rings, each composed of seven catalytic beta subunits, are sandwiched by two outer rings, each composed of seven alpha subunits. The catalytic chamber with the active sites is on the inside of the barrel. Has a gated structure, the ends of the cylinder being occluded by the N-termini of the alpha-subunits. Is capped by the proteasome-associated ATPase, ARC.</text>
</comment>
<comment type="subcellular location">
    <subcellularLocation>
        <location evidence="1">Cytoplasm</location>
    </subcellularLocation>
</comment>
<comment type="similarity">
    <text evidence="1">Belongs to the peptidase T1B family.</text>
</comment>
<protein>
    <recommendedName>
        <fullName evidence="1">Proteasome subunit beta</fullName>
        <ecNumber evidence="1">3.4.25.1</ecNumber>
    </recommendedName>
    <alternativeName>
        <fullName evidence="1">20S proteasome beta subunit</fullName>
    </alternativeName>
    <alternativeName>
        <fullName evidence="1">Proteasome core protein PrcB</fullName>
    </alternativeName>
</protein>
<sequence length="304" mass="32266">MTWPHFEQLAFPDLSRHSSHSTTRGVPSVPMDLSSFSDMLRRQAPHLLPFRGDASLTPTDAVPHGTTIVALKFPGGVVMAGDRRATQGNMIASRDVQKVYITDDYTATGIAGTAAIAVEFARLYAVELEHYEKLEGVALTFAGKVNRLATMVRGNLGAALQGFVALPLLAGFDLDDPDPQAAGRIVSFDAAGGHNLEEEGFQSVGSGSIFAKSSMKKLYHQVTDADSALRVAVEALYDAADDDSATGGPDLVRGIFPTAVLITADGAEEVTQERIAGLAREVIQNRSRADTFGPDAHAPRGTDS</sequence>
<feature type="propeptide" id="PRO_0000397540" description="Removed in mature form; by autocatalysis" evidence="1">
    <location>
        <begin position="1"/>
        <end position="65"/>
    </location>
</feature>
<feature type="chain" id="PRO_0000397541" description="Proteasome subunit beta">
    <location>
        <begin position="66"/>
        <end position="304"/>
    </location>
</feature>
<feature type="active site" description="Nucleophile" evidence="1">
    <location>
        <position position="66"/>
    </location>
</feature>
<name>PSB_MYCSJ</name>
<accession>A3Q193</accession>
<dbReference type="EC" id="3.4.25.1" evidence="1"/>
<dbReference type="EMBL" id="CP000580">
    <property type="protein sequence ID" value="ABN98920.1"/>
    <property type="molecule type" value="Genomic_DNA"/>
</dbReference>
<dbReference type="SMR" id="A3Q193"/>
<dbReference type="MEROPS" id="T01.005"/>
<dbReference type="KEGG" id="mjl:Mjls_3141"/>
<dbReference type="HOGENOM" id="CLU_035750_2_0_11"/>
<dbReference type="BioCyc" id="MSP164757:G1G8C-3166-MONOMER"/>
<dbReference type="UniPathway" id="UPA00997"/>
<dbReference type="GO" id="GO:0005737">
    <property type="term" value="C:cytoplasm"/>
    <property type="evidence" value="ECO:0007669"/>
    <property type="project" value="UniProtKB-SubCell"/>
</dbReference>
<dbReference type="GO" id="GO:0019774">
    <property type="term" value="C:proteasome core complex, beta-subunit complex"/>
    <property type="evidence" value="ECO:0007669"/>
    <property type="project" value="UniProtKB-UniRule"/>
</dbReference>
<dbReference type="GO" id="GO:0004298">
    <property type="term" value="F:threonine-type endopeptidase activity"/>
    <property type="evidence" value="ECO:0007669"/>
    <property type="project" value="UniProtKB-UniRule"/>
</dbReference>
<dbReference type="GO" id="GO:0019941">
    <property type="term" value="P:modification-dependent protein catabolic process"/>
    <property type="evidence" value="ECO:0007669"/>
    <property type="project" value="UniProtKB-UniRule"/>
</dbReference>
<dbReference type="GO" id="GO:0010498">
    <property type="term" value="P:proteasomal protein catabolic process"/>
    <property type="evidence" value="ECO:0007669"/>
    <property type="project" value="UniProtKB-UniRule"/>
</dbReference>
<dbReference type="CDD" id="cd01906">
    <property type="entry name" value="proteasome_protease_HslV"/>
    <property type="match status" value="1"/>
</dbReference>
<dbReference type="FunFam" id="3.60.20.10:FF:000046">
    <property type="entry name" value="Proteasome subunit beta"/>
    <property type="match status" value="1"/>
</dbReference>
<dbReference type="Gene3D" id="3.60.20.10">
    <property type="entry name" value="Glutamine Phosphoribosylpyrophosphate, subunit 1, domain 1"/>
    <property type="match status" value="1"/>
</dbReference>
<dbReference type="HAMAP" id="MF_02113_B">
    <property type="entry name" value="Proteasome_B_B"/>
    <property type="match status" value="1"/>
</dbReference>
<dbReference type="InterPro" id="IPR029055">
    <property type="entry name" value="Ntn_hydrolases_N"/>
</dbReference>
<dbReference type="InterPro" id="IPR001353">
    <property type="entry name" value="Proteasome_sua/b"/>
</dbReference>
<dbReference type="InterPro" id="IPR023333">
    <property type="entry name" value="Proteasome_suB-type"/>
</dbReference>
<dbReference type="InterPro" id="IPR022483">
    <property type="entry name" value="PSB_actinobac"/>
</dbReference>
<dbReference type="NCBIfam" id="TIGR03690">
    <property type="entry name" value="20S_bact_beta"/>
    <property type="match status" value="1"/>
</dbReference>
<dbReference type="PANTHER" id="PTHR32194:SF0">
    <property type="entry name" value="ATP-DEPENDENT PROTEASE SUBUNIT HSLV"/>
    <property type="match status" value="1"/>
</dbReference>
<dbReference type="PANTHER" id="PTHR32194">
    <property type="entry name" value="METALLOPROTEASE TLDD"/>
    <property type="match status" value="1"/>
</dbReference>
<dbReference type="Pfam" id="PF00227">
    <property type="entry name" value="Proteasome"/>
    <property type="match status" value="1"/>
</dbReference>
<dbReference type="SUPFAM" id="SSF56235">
    <property type="entry name" value="N-terminal nucleophile aminohydrolases (Ntn hydrolases)"/>
    <property type="match status" value="1"/>
</dbReference>
<dbReference type="PROSITE" id="PS51476">
    <property type="entry name" value="PROTEASOME_BETA_2"/>
    <property type="match status" value="1"/>
</dbReference>
<evidence type="ECO:0000255" key="1">
    <source>
        <dbReference type="HAMAP-Rule" id="MF_02113"/>
    </source>
</evidence>
<proteinExistence type="inferred from homology"/>